<protein>
    <recommendedName>
        <fullName evidence="4">Oxidoreductase nsrR</fullName>
        <ecNumber evidence="2">1.-.-.-</ecNumber>
    </recommendedName>
    <alternativeName>
        <fullName evidence="4">Neosartorin biosynthesis cluster protein R</fullName>
    </alternativeName>
</protein>
<dbReference type="EC" id="1.-.-.-" evidence="2"/>
<dbReference type="EMBL" id="MSZS01000005">
    <property type="protein sequence ID" value="PKX92292.1"/>
    <property type="molecule type" value="Genomic_DNA"/>
</dbReference>
<dbReference type="SMR" id="A0A2I1C3T1"/>
<dbReference type="STRING" id="1392255.A0A2I1C3T1"/>
<dbReference type="VEuPathDB" id="FungiDB:P174DRAFT_371720"/>
<dbReference type="OMA" id="DNIPGCH"/>
<dbReference type="OrthoDB" id="10254221at2759"/>
<dbReference type="Proteomes" id="UP000234474">
    <property type="component" value="Unassembled WGS sequence"/>
</dbReference>
<dbReference type="GO" id="GO:0004497">
    <property type="term" value="F:monooxygenase activity"/>
    <property type="evidence" value="ECO:0007669"/>
    <property type="project" value="UniProtKB-KW"/>
</dbReference>
<dbReference type="Gene3D" id="3.40.50.720">
    <property type="entry name" value="NAD(P)-binding Rossmann-like Domain"/>
    <property type="match status" value="1"/>
</dbReference>
<dbReference type="InterPro" id="IPR016040">
    <property type="entry name" value="NAD(P)-bd_dom"/>
</dbReference>
<dbReference type="InterPro" id="IPR036291">
    <property type="entry name" value="NAD(P)-bd_dom_sf"/>
</dbReference>
<dbReference type="PANTHER" id="PTHR15020">
    <property type="entry name" value="FLAVIN REDUCTASE-RELATED"/>
    <property type="match status" value="1"/>
</dbReference>
<dbReference type="PANTHER" id="PTHR15020:SF37">
    <property type="entry name" value="OXIDOREDUCTASE MDPK"/>
    <property type="match status" value="1"/>
</dbReference>
<dbReference type="Pfam" id="PF13460">
    <property type="entry name" value="NAD_binding_10"/>
    <property type="match status" value="1"/>
</dbReference>
<dbReference type="SUPFAM" id="SSF51735">
    <property type="entry name" value="NAD(P)-binding Rossmann-fold domains"/>
    <property type="match status" value="1"/>
</dbReference>
<comment type="function">
    <text evidence="1 2 3">Oxidoreductase; part of the gene cluster that mediates the biosynthesis of the tetrahydroxanthone dimer neosartorin, which exhibits antibacterial activity (PubMed:30394754, PubMed:32105084, PubMed:33891392). The two different monomeric units appear to be synthesized by the same set of enzymes, among which the Baeyer-Villiger monooxygenase nsrF is the key enzyme for the divergence of the biosynthetic routes (PubMed:32105084). The pathway begins with the synthesis of atrochrysone thioester by the polyketide synthase nsrB (PubMed:32105084). The atrochrysone carboxyl ACP thioesterase nsrC then breaks the thioester bond and releases the atrochrysone carboxylic acid from AacuL (PubMed:32105084). Atrochrysone carboxylic acid is decarboxylated by the decarboxylase nsrE, and oxidized by the anthrone oxygenase nsrD to yield emodin (PubMed:32105084). Emodin is then reduced to emodin hydroquinone by the oxidoreductase nsrR (PubMed:32105084). A-ring reduction by the short chain dehydrogenase nsrJ, dehydration by the scytalone dehydratase-like protein nsrI and probable spontaneous re-oxidation, results in overall deoxygenation to chrysophanol (PubMed:32105084). The Baeyer-Villiger monooxygenase nsrF accepts chrysophanol as a substrate to insert one oxygen atom at two different positions to yield the precursors of both monomric units (PubMed:30394754, PubMed:32105084, PubMed:33891392). NsrF is promiscuous/flexible in interacting with the 2 (non methylated and methylated) aromatic rings of chrysophanol, thus diverging the biosynthetic pathway at this point (PubMed:30394754, PubMed:32105084, PubMed:33891392). After the hydrolysis of the lactones, methylesterification by the methyltransferase nsrG yields respectively moniliphenone and 2,2',6'-trihydroxy-4-methyl-6-methoxya-cyldiphenylmethanone (PubMed:30394754, PubMed:32105084). The next steps are the hydroxylation by the FAD-dependent monooxygenase nsrK, followed by isomerization by the monooxygenase nsrQ (PubMed:32105084). The short chain dehydrogenase/reductase nsrO then catalyzes the C-5 ketoreduction to give the xanthone skeleton of blennolide C and 5-acetylblennolide A (PubMed:32105084). The acetyltransferase nsrL has a strict substrate specificity and uses only blennolide A but not blennolide C to yield 5-acetylblennolide A as the single-acetylated product (PubMed:30394754). In the final step of the biosynthesis, the heterodimerization of the 2 xanthones, blennolide C and 5-acetylblennolide A, is catalyzed by the cytochrome P450 monooxygenase nsrP (PubMed:30394754). NsrP can utilize at least three different xanthones as its substrates to perform the dimerization reaction (PubMed:30394754).</text>
</comment>
<comment type="pathway">
    <text evidence="2">Secondary metabolite biosynthesis.</text>
</comment>
<comment type="similarity">
    <text evidence="5">Belongs to the avfA family.</text>
</comment>
<organism>
    <name type="scientific">Aspergillus novofumigatus (strain IBT 16806)</name>
    <dbReference type="NCBI Taxonomy" id="1392255"/>
    <lineage>
        <taxon>Eukaryota</taxon>
        <taxon>Fungi</taxon>
        <taxon>Dikarya</taxon>
        <taxon>Ascomycota</taxon>
        <taxon>Pezizomycotina</taxon>
        <taxon>Eurotiomycetes</taxon>
        <taxon>Eurotiomycetidae</taxon>
        <taxon>Eurotiales</taxon>
        <taxon>Aspergillaceae</taxon>
        <taxon>Aspergillus</taxon>
        <taxon>Aspergillus subgen. Fumigati</taxon>
    </lineage>
</organism>
<accession>A0A2I1C3T1</accession>
<proteinExistence type="evidence at protein level"/>
<name>NSRR_ASPN1</name>
<evidence type="ECO:0000269" key="1">
    <source>
    </source>
</evidence>
<evidence type="ECO:0000269" key="2">
    <source>
    </source>
</evidence>
<evidence type="ECO:0000269" key="3">
    <source>
    </source>
</evidence>
<evidence type="ECO:0000303" key="4">
    <source>
    </source>
</evidence>
<evidence type="ECO:0000305" key="5"/>
<sequence length="265" mass="29219">MFPRTYAVLGSTGNCGTALIENLLKTPDARIHAYCRNRPKLLQILPQLEESDRVTIFEGNIQDAELLQSCLRNCHAVFLVVSTNDNIPGCHLAQDTATAVIQALQDLKRNNPTSTVMPKLVLLSSATTDSQLSRDVPSLLRFILHRSASYVYEDLVVTEKLLHAQKDWLTSIFIKPGALSVDIQRGHALSQTDQDGPLSYLDLAAAMIEAADEETGCYDMQSLGVVNTNGKAKFPTGTPLCILVGLLRHYFPFLHPYLPMNTGPR</sequence>
<keyword id="KW-0503">Monooxygenase</keyword>
<keyword id="KW-0560">Oxidoreductase</keyword>
<keyword id="KW-1185">Reference proteome</keyword>
<reference key="1">
    <citation type="journal article" date="2018" name="Proc. Natl. Acad. Sci. U.S.A.">
        <title>Linking secondary metabolites to gene clusters through genome sequencing of six diverse Aspergillus species.</title>
        <authorList>
            <person name="Kjaerboelling I."/>
            <person name="Vesth T.C."/>
            <person name="Frisvad J.C."/>
            <person name="Nybo J.L."/>
            <person name="Theobald S."/>
            <person name="Kuo A."/>
            <person name="Bowyer P."/>
            <person name="Matsuda Y."/>
            <person name="Mondo S."/>
            <person name="Lyhne E.K."/>
            <person name="Kogle M.E."/>
            <person name="Clum A."/>
            <person name="Lipzen A."/>
            <person name="Salamov A."/>
            <person name="Ngan C.Y."/>
            <person name="Daum C."/>
            <person name="Chiniquy J."/>
            <person name="Barry K."/>
            <person name="LaButti K."/>
            <person name="Haridas S."/>
            <person name="Simmons B.A."/>
            <person name="Magnuson J.K."/>
            <person name="Mortensen U.H."/>
            <person name="Larsen T.O."/>
            <person name="Grigoriev I.V."/>
            <person name="Baker S.E."/>
            <person name="Andersen M.R."/>
        </authorList>
    </citation>
    <scope>NUCLEOTIDE SEQUENCE [LARGE SCALE GENOMIC DNA]</scope>
    <source>
        <strain>IBT 16806</strain>
    </source>
</reference>
<reference key="2">
    <citation type="journal article" date="2018" name="Org. Lett.">
        <title>Genetic characterization of neosartorin biosynthesis provides insight into heterodimeric natural product generation.</title>
        <authorList>
            <person name="Matsuda Y."/>
            <person name="Gotfredsen C.H."/>
            <person name="Larsen T.O."/>
        </authorList>
    </citation>
    <scope>FUNCTION</scope>
</reference>
<reference key="3">
    <citation type="journal article" date="2020" name="Org. Lett.">
        <title>Unraveling the fungal strategy for tetrahydroxanthone biosynthesis and diversification.</title>
        <authorList>
            <person name="Wei X."/>
            <person name="Matsuda Y."/>
        </authorList>
    </citation>
    <scope>FUNCTION</scope>
    <scope>CATALYTIC ACTIVITY</scope>
    <scope>PATHWAY</scope>
</reference>
<reference key="4">
    <citation type="journal article" date="2021" name="J. Nat. Prod.">
        <title>Heterologous biosynthesis of tetrahydroxanthone dimers: determination of key factors for selective or divergent synthesis.</title>
        <authorList>
            <person name="Wei X."/>
            <person name="Chen X."/>
            <person name="Chen L."/>
            <person name="Yan D."/>
            <person name="Wang W.G."/>
            <person name="Matsuda Y."/>
        </authorList>
    </citation>
    <scope>FUNCTION</scope>
</reference>
<gene>
    <name evidence="4" type="primary">nsrR</name>
    <name type="ORF">P174DRAFT_371720</name>
</gene>
<feature type="chain" id="PRO_0000453441" description="Oxidoreductase nsrR">
    <location>
        <begin position="1"/>
        <end position="265"/>
    </location>
</feature>